<accession>Q8ZBC5</accession>
<accession>Q0WBF6</accession>
<accession>Q74X69</accession>
<accession>Q7CKI8</accession>
<gene>
    <name evidence="1" type="primary">rpsO</name>
    <name type="ordered locus">YPO3493</name>
    <name type="ordered locus">y0691</name>
    <name type="ordered locus">YP_0590</name>
</gene>
<organism>
    <name type="scientific">Yersinia pestis</name>
    <dbReference type="NCBI Taxonomy" id="632"/>
    <lineage>
        <taxon>Bacteria</taxon>
        <taxon>Pseudomonadati</taxon>
        <taxon>Pseudomonadota</taxon>
        <taxon>Gammaproteobacteria</taxon>
        <taxon>Enterobacterales</taxon>
        <taxon>Yersiniaceae</taxon>
        <taxon>Yersinia</taxon>
    </lineage>
</organism>
<reference key="1">
    <citation type="journal article" date="2001" name="Nature">
        <title>Genome sequence of Yersinia pestis, the causative agent of plague.</title>
        <authorList>
            <person name="Parkhill J."/>
            <person name="Wren B.W."/>
            <person name="Thomson N.R."/>
            <person name="Titball R.W."/>
            <person name="Holden M.T.G."/>
            <person name="Prentice M.B."/>
            <person name="Sebaihia M."/>
            <person name="James K.D."/>
            <person name="Churcher C.M."/>
            <person name="Mungall K.L."/>
            <person name="Baker S."/>
            <person name="Basham D."/>
            <person name="Bentley S.D."/>
            <person name="Brooks K."/>
            <person name="Cerdeno-Tarraga A.-M."/>
            <person name="Chillingworth T."/>
            <person name="Cronin A."/>
            <person name="Davies R.M."/>
            <person name="Davis P."/>
            <person name="Dougan G."/>
            <person name="Feltwell T."/>
            <person name="Hamlin N."/>
            <person name="Holroyd S."/>
            <person name="Jagels K."/>
            <person name="Karlyshev A.V."/>
            <person name="Leather S."/>
            <person name="Moule S."/>
            <person name="Oyston P.C.F."/>
            <person name="Quail M.A."/>
            <person name="Rutherford K.M."/>
            <person name="Simmonds M."/>
            <person name="Skelton J."/>
            <person name="Stevens K."/>
            <person name="Whitehead S."/>
            <person name="Barrell B.G."/>
        </authorList>
    </citation>
    <scope>NUCLEOTIDE SEQUENCE [LARGE SCALE GENOMIC DNA]</scope>
    <source>
        <strain>CO-92 / Biovar Orientalis</strain>
    </source>
</reference>
<reference key="2">
    <citation type="journal article" date="2002" name="J. Bacteriol.">
        <title>Genome sequence of Yersinia pestis KIM.</title>
        <authorList>
            <person name="Deng W."/>
            <person name="Burland V."/>
            <person name="Plunkett G. III"/>
            <person name="Boutin A."/>
            <person name="Mayhew G.F."/>
            <person name="Liss P."/>
            <person name="Perna N.T."/>
            <person name="Rose D.J."/>
            <person name="Mau B."/>
            <person name="Zhou S."/>
            <person name="Schwartz D.C."/>
            <person name="Fetherston J.D."/>
            <person name="Lindler L.E."/>
            <person name="Brubaker R.R."/>
            <person name="Plano G.V."/>
            <person name="Straley S.C."/>
            <person name="McDonough K.A."/>
            <person name="Nilles M.L."/>
            <person name="Matson J.S."/>
            <person name="Blattner F.R."/>
            <person name="Perry R.D."/>
        </authorList>
    </citation>
    <scope>NUCLEOTIDE SEQUENCE [LARGE SCALE GENOMIC DNA]</scope>
    <source>
        <strain>KIM10+ / Biovar Mediaevalis</strain>
    </source>
</reference>
<reference key="3">
    <citation type="journal article" date="2004" name="DNA Res.">
        <title>Complete genome sequence of Yersinia pestis strain 91001, an isolate avirulent to humans.</title>
        <authorList>
            <person name="Song Y."/>
            <person name="Tong Z."/>
            <person name="Wang J."/>
            <person name="Wang L."/>
            <person name="Guo Z."/>
            <person name="Han Y."/>
            <person name="Zhang J."/>
            <person name="Pei D."/>
            <person name="Zhou D."/>
            <person name="Qin H."/>
            <person name="Pang X."/>
            <person name="Han Y."/>
            <person name="Zhai J."/>
            <person name="Li M."/>
            <person name="Cui B."/>
            <person name="Qi Z."/>
            <person name="Jin L."/>
            <person name="Dai R."/>
            <person name="Chen F."/>
            <person name="Li S."/>
            <person name="Ye C."/>
            <person name="Du Z."/>
            <person name="Lin W."/>
            <person name="Wang J."/>
            <person name="Yu J."/>
            <person name="Yang H."/>
            <person name="Wang J."/>
            <person name="Huang P."/>
            <person name="Yang R."/>
        </authorList>
    </citation>
    <scope>NUCLEOTIDE SEQUENCE [LARGE SCALE GENOMIC DNA]</scope>
    <source>
        <strain>91001 / Biovar Mediaevalis</strain>
    </source>
</reference>
<protein>
    <recommendedName>
        <fullName evidence="1">Small ribosomal subunit protein uS15</fullName>
    </recommendedName>
    <alternativeName>
        <fullName evidence="2">30S ribosomal protein S15</fullName>
    </alternativeName>
</protein>
<evidence type="ECO:0000255" key="1">
    <source>
        <dbReference type="HAMAP-Rule" id="MF_01343"/>
    </source>
</evidence>
<evidence type="ECO:0000305" key="2"/>
<feature type="chain" id="PRO_0000115598" description="Small ribosomal subunit protein uS15">
    <location>
        <begin position="1"/>
        <end position="89"/>
    </location>
</feature>
<keyword id="KW-1185">Reference proteome</keyword>
<keyword id="KW-0687">Ribonucleoprotein</keyword>
<keyword id="KW-0689">Ribosomal protein</keyword>
<keyword id="KW-0694">RNA-binding</keyword>
<keyword id="KW-0699">rRNA-binding</keyword>
<sequence length="89" mass="10140">MSLSVEAKAKIVADFGRGTNDTGSSEVQVALLTAQINHLQGHFSEHKKDHHSRRGLLRMVSTRRKLLDYLKRQDVARYASLIERLGLRR</sequence>
<comment type="function">
    <text evidence="1">One of the primary rRNA binding proteins, it binds directly to 16S rRNA where it helps nucleate assembly of the platform of the 30S subunit by binding and bridging several RNA helices of the 16S rRNA.</text>
</comment>
<comment type="function">
    <text evidence="1">Forms an intersubunit bridge (bridge B4) with the 23S rRNA of the 50S subunit in the ribosome.</text>
</comment>
<comment type="subunit">
    <text evidence="1">Part of the 30S ribosomal subunit. Forms a bridge to the 50S subunit in the 70S ribosome, contacting the 23S rRNA.</text>
</comment>
<comment type="similarity">
    <text evidence="1">Belongs to the universal ribosomal protein uS15 family.</text>
</comment>
<name>RS15_YERPE</name>
<proteinExistence type="inferred from homology"/>
<dbReference type="EMBL" id="AL590842">
    <property type="protein sequence ID" value="CAL22081.1"/>
    <property type="molecule type" value="Genomic_DNA"/>
</dbReference>
<dbReference type="EMBL" id="AE009952">
    <property type="protein sequence ID" value="AAM84279.1"/>
    <property type="molecule type" value="Genomic_DNA"/>
</dbReference>
<dbReference type="EMBL" id="AE017042">
    <property type="protein sequence ID" value="AAS60860.1"/>
    <property type="molecule type" value="Genomic_DNA"/>
</dbReference>
<dbReference type="PIR" id="AF0424">
    <property type="entry name" value="AF0424"/>
</dbReference>
<dbReference type="RefSeq" id="WP_002209257.1">
    <property type="nucleotide sequence ID" value="NZ_WUCM01000036.1"/>
</dbReference>
<dbReference type="RefSeq" id="YP_002348382.1">
    <property type="nucleotide sequence ID" value="NC_003143.1"/>
</dbReference>
<dbReference type="SMR" id="Q8ZBC5"/>
<dbReference type="STRING" id="214092.YPO3493"/>
<dbReference type="PaxDb" id="214092-YPO3493"/>
<dbReference type="DNASU" id="1145638"/>
<dbReference type="EnsemblBacteria" id="AAS60860">
    <property type="protein sequence ID" value="AAS60860"/>
    <property type="gene ID" value="YP_0590"/>
</dbReference>
<dbReference type="GeneID" id="96663990"/>
<dbReference type="KEGG" id="ype:YPO3493"/>
<dbReference type="KEGG" id="ypj:CH55_3327"/>
<dbReference type="KEGG" id="ypk:y0691"/>
<dbReference type="KEGG" id="ypl:CH46_1597"/>
<dbReference type="KEGG" id="ypm:YP_0590"/>
<dbReference type="KEGG" id="ypv:BZ15_29"/>
<dbReference type="KEGG" id="ypw:CH59_2554"/>
<dbReference type="PATRIC" id="fig|214092.21.peg.3987"/>
<dbReference type="eggNOG" id="COG0184">
    <property type="taxonomic scope" value="Bacteria"/>
</dbReference>
<dbReference type="HOGENOM" id="CLU_148518_0_0_6"/>
<dbReference type="OMA" id="RINYLTE"/>
<dbReference type="Proteomes" id="UP000000815">
    <property type="component" value="Chromosome"/>
</dbReference>
<dbReference type="Proteomes" id="UP000001019">
    <property type="component" value="Chromosome"/>
</dbReference>
<dbReference type="Proteomes" id="UP000002490">
    <property type="component" value="Chromosome"/>
</dbReference>
<dbReference type="GO" id="GO:0022627">
    <property type="term" value="C:cytosolic small ribosomal subunit"/>
    <property type="evidence" value="ECO:0000318"/>
    <property type="project" value="GO_Central"/>
</dbReference>
<dbReference type="GO" id="GO:0019843">
    <property type="term" value="F:rRNA binding"/>
    <property type="evidence" value="ECO:0007669"/>
    <property type="project" value="UniProtKB-UniRule"/>
</dbReference>
<dbReference type="GO" id="GO:0003735">
    <property type="term" value="F:structural constituent of ribosome"/>
    <property type="evidence" value="ECO:0007669"/>
    <property type="project" value="InterPro"/>
</dbReference>
<dbReference type="GO" id="GO:0006412">
    <property type="term" value="P:translation"/>
    <property type="evidence" value="ECO:0007669"/>
    <property type="project" value="UniProtKB-UniRule"/>
</dbReference>
<dbReference type="CDD" id="cd00353">
    <property type="entry name" value="Ribosomal_S15p_S13e"/>
    <property type="match status" value="1"/>
</dbReference>
<dbReference type="FunFam" id="1.10.287.10:FF:000002">
    <property type="entry name" value="30S ribosomal protein S15"/>
    <property type="match status" value="1"/>
</dbReference>
<dbReference type="Gene3D" id="6.10.250.3130">
    <property type="match status" value="1"/>
</dbReference>
<dbReference type="Gene3D" id="1.10.287.10">
    <property type="entry name" value="S15/NS1, RNA-binding"/>
    <property type="match status" value="1"/>
</dbReference>
<dbReference type="HAMAP" id="MF_01343_B">
    <property type="entry name" value="Ribosomal_uS15_B"/>
    <property type="match status" value="1"/>
</dbReference>
<dbReference type="InterPro" id="IPR000589">
    <property type="entry name" value="Ribosomal_uS15"/>
</dbReference>
<dbReference type="InterPro" id="IPR005290">
    <property type="entry name" value="Ribosomal_uS15_bac-type"/>
</dbReference>
<dbReference type="InterPro" id="IPR009068">
    <property type="entry name" value="uS15_NS1_RNA-bd_sf"/>
</dbReference>
<dbReference type="NCBIfam" id="TIGR00952">
    <property type="entry name" value="S15_bact"/>
    <property type="match status" value="1"/>
</dbReference>
<dbReference type="PANTHER" id="PTHR23321">
    <property type="entry name" value="RIBOSOMAL PROTEIN S15, BACTERIAL AND ORGANELLAR"/>
    <property type="match status" value="1"/>
</dbReference>
<dbReference type="PANTHER" id="PTHR23321:SF26">
    <property type="entry name" value="SMALL RIBOSOMAL SUBUNIT PROTEIN US15M"/>
    <property type="match status" value="1"/>
</dbReference>
<dbReference type="Pfam" id="PF00312">
    <property type="entry name" value="Ribosomal_S15"/>
    <property type="match status" value="1"/>
</dbReference>
<dbReference type="SMART" id="SM01387">
    <property type="entry name" value="Ribosomal_S15"/>
    <property type="match status" value="1"/>
</dbReference>
<dbReference type="SUPFAM" id="SSF47060">
    <property type="entry name" value="S15/NS1 RNA-binding domain"/>
    <property type="match status" value="1"/>
</dbReference>
<dbReference type="PROSITE" id="PS00362">
    <property type="entry name" value="RIBOSOMAL_S15"/>
    <property type="match status" value="1"/>
</dbReference>